<gene>
    <name evidence="1" type="primary">dapA</name>
    <name type="ordered locus">Mlg_2476</name>
</gene>
<protein>
    <recommendedName>
        <fullName evidence="1">4-hydroxy-tetrahydrodipicolinate synthase</fullName>
        <shortName evidence="1">HTPA synthase</shortName>
        <ecNumber evidence="1">4.3.3.7</ecNumber>
    </recommendedName>
</protein>
<comment type="function">
    <text evidence="1">Catalyzes the condensation of (S)-aspartate-beta-semialdehyde [(S)-ASA] and pyruvate to 4-hydroxy-tetrahydrodipicolinate (HTPA).</text>
</comment>
<comment type="catalytic activity">
    <reaction evidence="1">
        <text>L-aspartate 4-semialdehyde + pyruvate = (2S,4S)-4-hydroxy-2,3,4,5-tetrahydrodipicolinate + H2O + H(+)</text>
        <dbReference type="Rhea" id="RHEA:34171"/>
        <dbReference type="ChEBI" id="CHEBI:15361"/>
        <dbReference type="ChEBI" id="CHEBI:15377"/>
        <dbReference type="ChEBI" id="CHEBI:15378"/>
        <dbReference type="ChEBI" id="CHEBI:67139"/>
        <dbReference type="ChEBI" id="CHEBI:537519"/>
        <dbReference type="EC" id="4.3.3.7"/>
    </reaction>
</comment>
<comment type="pathway">
    <text evidence="1">Amino-acid biosynthesis; L-lysine biosynthesis via DAP pathway; (S)-tetrahydrodipicolinate from L-aspartate: step 3/4.</text>
</comment>
<comment type="subunit">
    <text evidence="1">Homotetramer; dimer of dimers.</text>
</comment>
<comment type="subcellular location">
    <subcellularLocation>
        <location evidence="1">Cytoplasm</location>
    </subcellularLocation>
</comment>
<comment type="similarity">
    <text evidence="1">Belongs to the DapA family.</text>
</comment>
<comment type="caution">
    <text evidence="2">Was originally thought to be a dihydrodipicolinate synthase (DHDPS), catalyzing the condensation of (S)-aspartate-beta-semialdehyde [(S)-ASA] and pyruvate to dihydrodipicolinate (DHDP). However, it was shown in E.coli that the product of the enzymatic reaction is not dihydrodipicolinate but in fact (4S)-4-hydroxy-2,3,4,5-tetrahydro-(2S)-dipicolinic acid (HTPA), and that the consecutive dehydration reaction leading to DHDP is not spontaneous but catalyzed by DapB.</text>
</comment>
<dbReference type="EC" id="4.3.3.7" evidence="1"/>
<dbReference type="EMBL" id="CP000453">
    <property type="protein sequence ID" value="ABI57816.1"/>
    <property type="molecule type" value="Genomic_DNA"/>
</dbReference>
<dbReference type="RefSeq" id="WP_011630209.1">
    <property type="nucleotide sequence ID" value="NC_008340.1"/>
</dbReference>
<dbReference type="SMR" id="Q0A5S1"/>
<dbReference type="KEGG" id="aeh:Mlg_2476"/>
<dbReference type="eggNOG" id="COG0329">
    <property type="taxonomic scope" value="Bacteria"/>
</dbReference>
<dbReference type="HOGENOM" id="CLU_049343_7_1_6"/>
<dbReference type="OrthoDB" id="9782828at2"/>
<dbReference type="UniPathway" id="UPA00034">
    <property type="reaction ID" value="UER00017"/>
</dbReference>
<dbReference type="Proteomes" id="UP000001962">
    <property type="component" value="Chromosome"/>
</dbReference>
<dbReference type="GO" id="GO:0005829">
    <property type="term" value="C:cytosol"/>
    <property type="evidence" value="ECO:0007669"/>
    <property type="project" value="TreeGrafter"/>
</dbReference>
<dbReference type="GO" id="GO:0008840">
    <property type="term" value="F:4-hydroxy-tetrahydrodipicolinate synthase activity"/>
    <property type="evidence" value="ECO:0007669"/>
    <property type="project" value="UniProtKB-UniRule"/>
</dbReference>
<dbReference type="GO" id="GO:0019877">
    <property type="term" value="P:diaminopimelate biosynthetic process"/>
    <property type="evidence" value="ECO:0007669"/>
    <property type="project" value="UniProtKB-UniRule"/>
</dbReference>
<dbReference type="GO" id="GO:0009089">
    <property type="term" value="P:lysine biosynthetic process via diaminopimelate"/>
    <property type="evidence" value="ECO:0007669"/>
    <property type="project" value="UniProtKB-UniRule"/>
</dbReference>
<dbReference type="CDD" id="cd00950">
    <property type="entry name" value="DHDPS"/>
    <property type="match status" value="1"/>
</dbReference>
<dbReference type="Gene3D" id="3.20.20.70">
    <property type="entry name" value="Aldolase class I"/>
    <property type="match status" value="1"/>
</dbReference>
<dbReference type="HAMAP" id="MF_00418">
    <property type="entry name" value="DapA"/>
    <property type="match status" value="1"/>
</dbReference>
<dbReference type="InterPro" id="IPR013785">
    <property type="entry name" value="Aldolase_TIM"/>
</dbReference>
<dbReference type="InterPro" id="IPR005263">
    <property type="entry name" value="DapA"/>
</dbReference>
<dbReference type="InterPro" id="IPR002220">
    <property type="entry name" value="DapA-like"/>
</dbReference>
<dbReference type="InterPro" id="IPR020625">
    <property type="entry name" value="Schiff_base-form_aldolases_AS"/>
</dbReference>
<dbReference type="InterPro" id="IPR020624">
    <property type="entry name" value="Schiff_base-form_aldolases_CS"/>
</dbReference>
<dbReference type="NCBIfam" id="TIGR00674">
    <property type="entry name" value="dapA"/>
    <property type="match status" value="1"/>
</dbReference>
<dbReference type="PANTHER" id="PTHR12128:SF66">
    <property type="entry name" value="4-HYDROXY-2-OXOGLUTARATE ALDOLASE, MITOCHONDRIAL"/>
    <property type="match status" value="1"/>
</dbReference>
<dbReference type="PANTHER" id="PTHR12128">
    <property type="entry name" value="DIHYDRODIPICOLINATE SYNTHASE"/>
    <property type="match status" value="1"/>
</dbReference>
<dbReference type="Pfam" id="PF00701">
    <property type="entry name" value="DHDPS"/>
    <property type="match status" value="1"/>
</dbReference>
<dbReference type="PIRSF" id="PIRSF001365">
    <property type="entry name" value="DHDPS"/>
    <property type="match status" value="1"/>
</dbReference>
<dbReference type="PRINTS" id="PR00146">
    <property type="entry name" value="DHPICSNTHASE"/>
</dbReference>
<dbReference type="SMART" id="SM01130">
    <property type="entry name" value="DHDPS"/>
    <property type="match status" value="1"/>
</dbReference>
<dbReference type="SUPFAM" id="SSF51569">
    <property type="entry name" value="Aldolase"/>
    <property type="match status" value="1"/>
</dbReference>
<dbReference type="PROSITE" id="PS00665">
    <property type="entry name" value="DHDPS_1"/>
    <property type="match status" value="1"/>
</dbReference>
<dbReference type="PROSITE" id="PS00666">
    <property type="entry name" value="DHDPS_2"/>
    <property type="match status" value="1"/>
</dbReference>
<accession>Q0A5S1</accession>
<reference key="1">
    <citation type="submission" date="2006-08" db="EMBL/GenBank/DDBJ databases">
        <title>Complete sequence of Alkalilimnicola ehrilichei MLHE-1.</title>
        <authorList>
            <person name="Copeland A."/>
            <person name="Lucas S."/>
            <person name="Lapidus A."/>
            <person name="Barry K."/>
            <person name="Detter J.C."/>
            <person name="Glavina del Rio T."/>
            <person name="Hammon N."/>
            <person name="Israni S."/>
            <person name="Dalin E."/>
            <person name="Tice H."/>
            <person name="Pitluck S."/>
            <person name="Sims D."/>
            <person name="Brettin T."/>
            <person name="Bruce D."/>
            <person name="Han C."/>
            <person name="Tapia R."/>
            <person name="Gilna P."/>
            <person name="Schmutz J."/>
            <person name="Larimer F."/>
            <person name="Land M."/>
            <person name="Hauser L."/>
            <person name="Kyrpides N."/>
            <person name="Mikhailova N."/>
            <person name="Oremland R.S."/>
            <person name="Hoeft S.E."/>
            <person name="Switzer-Blum J."/>
            <person name="Kulp T."/>
            <person name="King G."/>
            <person name="Tabita R."/>
            <person name="Witte B."/>
            <person name="Santini J.M."/>
            <person name="Basu P."/>
            <person name="Hollibaugh J.T."/>
            <person name="Xie G."/>
            <person name="Stolz J.F."/>
            <person name="Richardson P."/>
        </authorList>
    </citation>
    <scope>NUCLEOTIDE SEQUENCE [LARGE SCALE GENOMIC DNA]</scope>
    <source>
        <strain>ATCC BAA-1101 / DSM 17681 / MLHE-1</strain>
    </source>
</reference>
<feature type="chain" id="PRO_1000050161" description="4-hydroxy-tetrahydrodipicolinate synthase">
    <location>
        <begin position="1"/>
        <end position="290"/>
    </location>
</feature>
<feature type="active site" description="Proton donor/acceptor" evidence="1">
    <location>
        <position position="133"/>
    </location>
</feature>
<feature type="active site" description="Schiff-base intermediate with substrate" evidence="1">
    <location>
        <position position="161"/>
    </location>
</feature>
<feature type="binding site" evidence="1">
    <location>
        <position position="45"/>
    </location>
    <ligand>
        <name>pyruvate</name>
        <dbReference type="ChEBI" id="CHEBI:15361"/>
    </ligand>
</feature>
<feature type="binding site" evidence="1">
    <location>
        <position position="202"/>
    </location>
    <ligand>
        <name>pyruvate</name>
        <dbReference type="ChEBI" id="CHEBI:15361"/>
    </ligand>
</feature>
<feature type="site" description="Part of a proton relay during catalysis" evidence="1">
    <location>
        <position position="44"/>
    </location>
</feature>
<feature type="site" description="Part of a proton relay during catalysis" evidence="1">
    <location>
        <position position="107"/>
    </location>
</feature>
<evidence type="ECO:0000255" key="1">
    <source>
        <dbReference type="HAMAP-Rule" id="MF_00418"/>
    </source>
</evidence>
<evidence type="ECO:0000305" key="2"/>
<organism>
    <name type="scientific">Alkalilimnicola ehrlichii (strain ATCC BAA-1101 / DSM 17681 / MLHE-1)</name>
    <dbReference type="NCBI Taxonomy" id="187272"/>
    <lineage>
        <taxon>Bacteria</taxon>
        <taxon>Pseudomonadati</taxon>
        <taxon>Pseudomonadota</taxon>
        <taxon>Gammaproteobacteria</taxon>
        <taxon>Chromatiales</taxon>
        <taxon>Ectothiorhodospiraceae</taxon>
        <taxon>Alkalilimnicola</taxon>
    </lineage>
</organism>
<keyword id="KW-0028">Amino-acid biosynthesis</keyword>
<keyword id="KW-0963">Cytoplasm</keyword>
<keyword id="KW-0220">Diaminopimelate biosynthesis</keyword>
<keyword id="KW-0456">Lyase</keyword>
<keyword id="KW-0457">Lysine biosynthesis</keyword>
<keyword id="KW-1185">Reference proteome</keyword>
<keyword id="KW-0704">Schiff base</keyword>
<name>DAPA_ALKEH</name>
<sequence length="290" mass="31112">MFHGSMVAMVTPMHPDGAVDEVSLARLVDYHVEHGTDAIVAVGTTGESATLDYDEHCHVMRKVVEAARGRIPVIGGTGANSTWEAIKLTRCAMEGGCDATLLVVPYYNKPTQDGLYRHFAAIADAVAIPQILYNVPGRTACDLLPDTVDRLADISNIVGIKEASTIERVHDLVERCSDRLDVFSGEDGLSREAVLAGAKGVISVTANVAPQQMHDMVAAALRGDEEEASRIDARLAALHSALFLESNPIPVKWAVSQMGLCGPSIRLPLTELSEQHHETVRQAMKLAGSL</sequence>
<proteinExistence type="inferred from homology"/>